<proteinExistence type="inferred from homology"/>
<dbReference type="EMBL" id="AP009552">
    <property type="protein sequence ID" value="BAG05557.1"/>
    <property type="molecule type" value="Genomic_DNA"/>
</dbReference>
<dbReference type="RefSeq" id="WP_012267966.1">
    <property type="nucleotide sequence ID" value="NC_010296.1"/>
</dbReference>
<dbReference type="SMR" id="B0JHZ5"/>
<dbReference type="STRING" id="449447.MAE_57350"/>
<dbReference type="PaxDb" id="449447-MAE_57350"/>
<dbReference type="EnsemblBacteria" id="BAG05557">
    <property type="protein sequence ID" value="BAG05557"/>
    <property type="gene ID" value="MAE_57350"/>
</dbReference>
<dbReference type="KEGG" id="mar:MAE_57350"/>
<dbReference type="PATRIC" id="fig|449447.4.peg.5244"/>
<dbReference type="eggNOG" id="COG0255">
    <property type="taxonomic scope" value="Bacteria"/>
</dbReference>
<dbReference type="HOGENOM" id="CLU_158491_0_0_3"/>
<dbReference type="BioCyc" id="MAER449447:MAE_RS24990-MONOMER"/>
<dbReference type="Proteomes" id="UP000001510">
    <property type="component" value="Chromosome"/>
</dbReference>
<dbReference type="GO" id="GO:0022625">
    <property type="term" value="C:cytosolic large ribosomal subunit"/>
    <property type="evidence" value="ECO:0007669"/>
    <property type="project" value="TreeGrafter"/>
</dbReference>
<dbReference type="GO" id="GO:0003735">
    <property type="term" value="F:structural constituent of ribosome"/>
    <property type="evidence" value="ECO:0007669"/>
    <property type="project" value="InterPro"/>
</dbReference>
<dbReference type="GO" id="GO:0006412">
    <property type="term" value="P:translation"/>
    <property type="evidence" value="ECO:0007669"/>
    <property type="project" value="UniProtKB-UniRule"/>
</dbReference>
<dbReference type="Gene3D" id="1.10.287.310">
    <property type="match status" value="1"/>
</dbReference>
<dbReference type="HAMAP" id="MF_00374">
    <property type="entry name" value="Ribosomal_uL29"/>
    <property type="match status" value="1"/>
</dbReference>
<dbReference type="InterPro" id="IPR050063">
    <property type="entry name" value="Ribosomal_protein_uL29"/>
</dbReference>
<dbReference type="InterPro" id="IPR001854">
    <property type="entry name" value="Ribosomal_uL29"/>
</dbReference>
<dbReference type="InterPro" id="IPR036049">
    <property type="entry name" value="Ribosomal_uL29_sf"/>
</dbReference>
<dbReference type="NCBIfam" id="TIGR00012">
    <property type="entry name" value="L29"/>
    <property type="match status" value="1"/>
</dbReference>
<dbReference type="PANTHER" id="PTHR10916">
    <property type="entry name" value="60S RIBOSOMAL PROTEIN L35/50S RIBOSOMAL PROTEIN L29"/>
    <property type="match status" value="1"/>
</dbReference>
<dbReference type="PANTHER" id="PTHR10916:SF0">
    <property type="entry name" value="LARGE RIBOSOMAL SUBUNIT PROTEIN UL29C"/>
    <property type="match status" value="1"/>
</dbReference>
<dbReference type="Pfam" id="PF00831">
    <property type="entry name" value="Ribosomal_L29"/>
    <property type="match status" value="1"/>
</dbReference>
<dbReference type="SUPFAM" id="SSF46561">
    <property type="entry name" value="Ribosomal protein L29 (L29p)"/>
    <property type="match status" value="1"/>
</dbReference>
<accession>B0JHZ5</accession>
<comment type="similarity">
    <text evidence="1">Belongs to the universal ribosomal protein uL29 family.</text>
</comment>
<keyword id="KW-0687">Ribonucleoprotein</keyword>
<keyword id="KW-0689">Ribosomal protein</keyword>
<reference key="1">
    <citation type="journal article" date="2007" name="DNA Res.">
        <title>Complete genomic structure of the bloom-forming toxic cyanobacterium Microcystis aeruginosa NIES-843.</title>
        <authorList>
            <person name="Kaneko T."/>
            <person name="Nakajima N."/>
            <person name="Okamoto S."/>
            <person name="Suzuki I."/>
            <person name="Tanabe Y."/>
            <person name="Tamaoki M."/>
            <person name="Nakamura Y."/>
            <person name="Kasai F."/>
            <person name="Watanabe A."/>
            <person name="Kawashima K."/>
            <person name="Kishida Y."/>
            <person name="Ono A."/>
            <person name="Shimizu Y."/>
            <person name="Takahashi C."/>
            <person name="Minami C."/>
            <person name="Fujishiro T."/>
            <person name="Kohara M."/>
            <person name="Katoh M."/>
            <person name="Nakazaki N."/>
            <person name="Nakayama S."/>
            <person name="Yamada M."/>
            <person name="Tabata S."/>
            <person name="Watanabe M.M."/>
        </authorList>
    </citation>
    <scope>NUCLEOTIDE SEQUENCE [LARGE SCALE GENOMIC DNA]</scope>
    <source>
        <strain>NIES-843 / IAM M-247</strain>
    </source>
</reference>
<organism>
    <name type="scientific">Microcystis aeruginosa (strain NIES-843 / IAM M-2473)</name>
    <dbReference type="NCBI Taxonomy" id="449447"/>
    <lineage>
        <taxon>Bacteria</taxon>
        <taxon>Bacillati</taxon>
        <taxon>Cyanobacteriota</taxon>
        <taxon>Cyanophyceae</taxon>
        <taxon>Oscillatoriophycideae</taxon>
        <taxon>Chroococcales</taxon>
        <taxon>Microcystaceae</taxon>
        <taxon>Microcystis</taxon>
    </lineage>
</organism>
<sequence length="72" mass="8362">MALPKIAEVRKMSDEEIAAAILAAKKKLFELRLQQATRRLEKTHEFKHTRHRLGQLLTVERERQLAQSTPEA</sequence>
<evidence type="ECO:0000255" key="1">
    <source>
        <dbReference type="HAMAP-Rule" id="MF_00374"/>
    </source>
</evidence>
<evidence type="ECO:0000305" key="2"/>
<gene>
    <name evidence="1" type="primary">rpmC</name>
    <name evidence="1" type="synonym">rpl29</name>
    <name type="ordered locus">MAE_57350</name>
</gene>
<feature type="chain" id="PRO_1000079891" description="Large ribosomal subunit protein uL29">
    <location>
        <begin position="1"/>
        <end position="72"/>
    </location>
</feature>
<name>RL29_MICAN</name>
<protein>
    <recommendedName>
        <fullName evidence="1">Large ribosomal subunit protein uL29</fullName>
    </recommendedName>
    <alternativeName>
        <fullName evidence="2">50S ribosomal protein L29</fullName>
    </alternativeName>
</protein>